<keyword id="KW-1185">Reference proteome</keyword>
<keyword id="KW-0687">Ribonucleoprotein</keyword>
<keyword id="KW-0689">Ribosomal protein</keyword>
<protein>
    <recommendedName>
        <fullName evidence="1">Large ribosomal subunit protein bL32</fullName>
    </recommendedName>
    <alternativeName>
        <fullName evidence="3">50S ribosomal protein L32</fullName>
    </alternativeName>
</protein>
<name>RL32_STRA5</name>
<comment type="similarity">
    <text evidence="1">Belongs to the bacterial ribosomal protein bL32 family.</text>
</comment>
<evidence type="ECO:0000255" key="1">
    <source>
        <dbReference type="HAMAP-Rule" id="MF_00340"/>
    </source>
</evidence>
<evidence type="ECO:0000256" key="2">
    <source>
        <dbReference type="SAM" id="MobiDB-lite"/>
    </source>
</evidence>
<evidence type="ECO:0000305" key="3"/>
<sequence length="60" mass="6922">MAKPARHTSKAKRNKRRTHYKLTAPSVQFDETTGDYSRSHRVSLKGYYKGRKIAKANEAK</sequence>
<reference key="1">
    <citation type="journal article" date="2002" name="Proc. Natl. Acad. Sci. U.S.A.">
        <title>Complete genome sequence and comparative genomic analysis of an emerging human pathogen, serotype V Streptococcus agalactiae.</title>
        <authorList>
            <person name="Tettelin H."/>
            <person name="Masignani V."/>
            <person name="Cieslewicz M.J."/>
            <person name="Eisen J.A."/>
            <person name="Peterson S.N."/>
            <person name="Wessels M.R."/>
            <person name="Paulsen I.T."/>
            <person name="Nelson K.E."/>
            <person name="Margarit I."/>
            <person name="Read T.D."/>
            <person name="Madoff L.C."/>
            <person name="Wolf A.M."/>
            <person name="Beanan M.J."/>
            <person name="Brinkac L.M."/>
            <person name="Daugherty S.C."/>
            <person name="DeBoy R.T."/>
            <person name="Durkin A.S."/>
            <person name="Kolonay J.F."/>
            <person name="Madupu R."/>
            <person name="Lewis M.R."/>
            <person name="Radune D."/>
            <person name="Fedorova N.B."/>
            <person name="Scanlan D."/>
            <person name="Khouri H.M."/>
            <person name="Mulligan S."/>
            <person name="Carty H.A."/>
            <person name="Cline R.T."/>
            <person name="Van Aken S.E."/>
            <person name="Gill J."/>
            <person name="Scarselli M."/>
            <person name="Mora M."/>
            <person name="Iacobini E.T."/>
            <person name="Brettoni C."/>
            <person name="Galli G."/>
            <person name="Mariani M."/>
            <person name="Vegni F."/>
            <person name="Maione D."/>
            <person name="Rinaudo D."/>
            <person name="Rappuoli R."/>
            <person name="Telford J.L."/>
            <person name="Kasper D.L."/>
            <person name="Grandi G."/>
            <person name="Fraser C.M."/>
        </authorList>
    </citation>
    <scope>NUCLEOTIDE SEQUENCE [LARGE SCALE GENOMIC DNA]</scope>
    <source>
        <strain>ATCC BAA-611 / 2603 V/R</strain>
    </source>
</reference>
<proteinExistence type="inferred from homology"/>
<accession>Q8DWV3</accession>
<dbReference type="EMBL" id="AE009948">
    <property type="protein sequence ID" value="AAN00967.1"/>
    <property type="molecule type" value="Genomic_DNA"/>
</dbReference>
<dbReference type="RefSeq" id="NP_689094.1">
    <property type="nucleotide sequence ID" value="NC_004116.1"/>
</dbReference>
<dbReference type="RefSeq" id="WP_001107938.1">
    <property type="nucleotide sequence ID" value="NC_004116.1"/>
</dbReference>
<dbReference type="SMR" id="Q8DWV3"/>
<dbReference type="STRING" id="208435.SAG2109"/>
<dbReference type="KEGG" id="sag:SAG2109"/>
<dbReference type="PATRIC" id="fig|208435.3.peg.2112"/>
<dbReference type="HOGENOM" id="CLU_129084_2_3_9"/>
<dbReference type="OrthoDB" id="9812874at2"/>
<dbReference type="Proteomes" id="UP000000821">
    <property type="component" value="Chromosome"/>
</dbReference>
<dbReference type="GO" id="GO:0015934">
    <property type="term" value="C:large ribosomal subunit"/>
    <property type="evidence" value="ECO:0007669"/>
    <property type="project" value="InterPro"/>
</dbReference>
<dbReference type="GO" id="GO:0003735">
    <property type="term" value="F:structural constituent of ribosome"/>
    <property type="evidence" value="ECO:0007669"/>
    <property type="project" value="InterPro"/>
</dbReference>
<dbReference type="GO" id="GO:0006412">
    <property type="term" value="P:translation"/>
    <property type="evidence" value="ECO:0007669"/>
    <property type="project" value="UniProtKB-UniRule"/>
</dbReference>
<dbReference type="HAMAP" id="MF_00340">
    <property type="entry name" value="Ribosomal_bL32"/>
    <property type="match status" value="1"/>
</dbReference>
<dbReference type="InterPro" id="IPR002677">
    <property type="entry name" value="Ribosomal_bL32"/>
</dbReference>
<dbReference type="InterPro" id="IPR044957">
    <property type="entry name" value="Ribosomal_bL32_bact"/>
</dbReference>
<dbReference type="InterPro" id="IPR011332">
    <property type="entry name" value="Ribosomal_zn-bd"/>
</dbReference>
<dbReference type="NCBIfam" id="TIGR01031">
    <property type="entry name" value="rpmF_bact"/>
    <property type="match status" value="1"/>
</dbReference>
<dbReference type="PANTHER" id="PTHR35534">
    <property type="entry name" value="50S RIBOSOMAL PROTEIN L32"/>
    <property type="match status" value="1"/>
</dbReference>
<dbReference type="PANTHER" id="PTHR35534:SF1">
    <property type="entry name" value="LARGE RIBOSOMAL SUBUNIT PROTEIN BL32"/>
    <property type="match status" value="1"/>
</dbReference>
<dbReference type="Pfam" id="PF01783">
    <property type="entry name" value="Ribosomal_L32p"/>
    <property type="match status" value="1"/>
</dbReference>
<dbReference type="SUPFAM" id="SSF57829">
    <property type="entry name" value="Zn-binding ribosomal proteins"/>
    <property type="match status" value="1"/>
</dbReference>
<feature type="chain" id="PRO_0000172410" description="Large ribosomal subunit protein bL32">
    <location>
        <begin position="1"/>
        <end position="60"/>
    </location>
</feature>
<feature type="region of interest" description="Disordered" evidence="2">
    <location>
        <begin position="1"/>
        <end position="22"/>
    </location>
</feature>
<feature type="compositionally biased region" description="Basic residues" evidence="2">
    <location>
        <begin position="1"/>
        <end position="20"/>
    </location>
</feature>
<organism>
    <name type="scientific">Streptococcus agalactiae serotype V (strain ATCC BAA-611 / 2603 V/R)</name>
    <dbReference type="NCBI Taxonomy" id="208435"/>
    <lineage>
        <taxon>Bacteria</taxon>
        <taxon>Bacillati</taxon>
        <taxon>Bacillota</taxon>
        <taxon>Bacilli</taxon>
        <taxon>Lactobacillales</taxon>
        <taxon>Streptococcaceae</taxon>
        <taxon>Streptococcus</taxon>
    </lineage>
</organism>
<gene>
    <name evidence="1" type="primary">rpmF</name>
    <name type="ordered locus">SAG2109</name>
</gene>